<proteinExistence type="inferred from homology"/>
<reference key="1">
    <citation type="journal article" date="1989" name="Mol. Biol. Evol.">
        <title>The CO-I and CO-II region of honeybee mitochondrial DNA: evidence for variation in insect mitochondrial evolutionary rates.</title>
        <authorList>
            <person name="Crozier R.H."/>
            <person name="Crozier Y.C."/>
            <person name="Mackinlay A.G."/>
        </authorList>
    </citation>
    <scope>NUCLEOTIDE SEQUENCE [GENOMIC DNA]</scope>
    <source>
        <tissue>Thorax</tissue>
    </source>
</reference>
<reference key="2">
    <citation type="journal article" date="1993" name="Genetics">
        <title>The mitochondrial genome of the honeybee Apis mellifera: complete sequence and genome organization.</title>
        <authorList>
            <person name="Crozier R.H."/>
            <person name="Crozier Y.C."/>
        </authorList>
    </citation>
    <scope>NUCLEOTIDE SEQUENCE [GENOMIC DNA]</scope>
    <source>
        <tissue>Thorax</tissue>
    </source>
</reference>
<accession>P20375</accession>
<geneLocation type="mitochondrion"/>
<dbReference type="EC" id="7.1.1.9"/>
<dbReference type="EMBL" id="M23409">
    <property type="protein sequence ID" value="AAA18477.1"/>
    <property type="molecule type" value="Genomic_DNA"/>
</dbReference>
<dbReference type="EMBL" id="L06178">
    <property type="protein sequence ID" value="AAB96800.1"/>
    <property type="molecule type" value="Genomic_DNA"/>
</dbReference>
<dbReference type="PIR" id="B32431">
    <property type="entry name" value="B32431"/>
</dbReference>
<dbReference type="SMR" id="P20375"/>
<dbReference type="CTD" id="4513"/>
<dbReference type="GO" id="GO:0005743">
    <property type="term" value="C:mitochondrial inner membrane"/>
    <property type="evidence" value="ECO:0007669"/>
    <property type="project" value="UniProtKB-SubCell"/>
</dbReference>
<dbReference type="GO" id="GO:0005507">
    <property type="term" value="F:copper ion binding"/>
    <property type="evidence" value="ECO:0007669"/>
    <property type="project" value="InterPro"/>
</dbReference>
<dbReference type="GO" id="GO:0004129">
    <property type="term" value="F:cytochrome-c oxidase activity"/>
    <property type="evidence" value="ECO:0007669"/>
    <property type="project" value="UniProtKB-EC"/>
</dbReference>
<dbReference type="GO" id="GO:0042773">
    <property type="term" value="P:ATP synthesis coupled electron transport"/>
    <property type="evidence" value="ECO:0007669"/>
    <property type="project" value="TreeGrafter"/>
</dbReference>
<dbReference type="CDD" id="cd13912">
    <property type="entry name" value="CcO_II_C"/>
    <property type="match status" value="1"/>
</dbReference>
<dbReference type="FunFam" id="2.60.40.420:FF:000001">
    <property type="entry name" value="Cytochrome c oxidase subunit 2"/>
    <property type="match status" value="1"/>
</dbReference>
<dbReference type="Gene3D" id="1.10.287.90">
    <property type="match status" value="1"/>
</dbReference>
<dbReference type="Gene3D" id="2.60.40.420">
    <property type="entry name" value="Cupredoxins - blue copper proteins"/>
    <property type="match status" value="1"/>
</dbReference>
<dbReference type="InterPro" id="IPR045187">
    <property type="entry name" value="CcO_II"/>
</dbReference>
<dbReference type="InterPro" id="IPR002429">
    <property type="entry name" value="CcO_II-like_C"/>
</dbReference>
<dbReference type="InterPro" id="IPR034210">
    <property type="entry name" value="CcO_II_C"/>
</dbReference>
<dbReference type="InterPro" id="IPR001505">
    <property type="entry name" value="Copper_CuA"/>
</dbReference>
<dbReference type="InterPro" id="IPR008972">
    <property type="entry name" value="Cupredoxin"/>
</dbReference>
<dbReference type="InterPro" id="IPR014222">
    <property type="entry name" value="Cyt_c_oxidase_su2"/>
</dbReference>
<dbReference type="InterPro" id="IPR011759">
    <property type="entry name" value="Cyt_c_oxidase_su2_TM_dom"/>
</dbReference>
<dbReference type="InterPro" id="IPR036257">
    <property type="entry name" value="Cyt_c_oxidase_su2_TM_sf"/>
</dbReference>
<dbReference type="NCBIfam" id="TIGR02866">
    <property type="entry name" value="CoxB"/>
    <property type="match status" value="1"/>
</dbReference>
<dbReference type="PANTHER" id="PTHR22888:SF9">
    <property type="entry name" value="CYTOCHROME C OXIDASE SUBUNIT 2"/>
    <property type="match status" value="1"/>
</dbReference>
<dbReference type="PANTHER" id="PTHR22888">
    <property type="entry name" value="CYTOCHROME C OXIDASE, SUBUNIT II"/>
    <property type="match status" value="1"/>
</dbReference>
<dbReference type="Pfam" id="PF00116">
    <property type="entry name" value="COX2"/>
    <property type="match status" value="1"/>
</dbReference>
<dbReference type="Pfam" id="PF02790">
    <property type="entry name" value="COX2_TM"/>
    <property type="match status" value="1"/>
</dbReference>
<dbReference type="PRINTS" id="PR01166">
    <property type="entry name" value="CYCOXIDASEII"/>
</dbReference>
<dbReference type="SUPFAM" id="SSF49503">
    <property type="entry name" value="Cupredoxins"/>
    <property type="match status" value="1"/>
</dbReference>
<dbReference type="SUPFAM" id="SSF81464">
    <property type="entry name" value="Cytochrome c oxidase subunit II-like, transmembrane region"/>
    <property type="match status" value="1"/>
</dbReference>
<dbReference type="PROSITE" id="PS00078">
    <property type="entry name" value="COX2"/>
    <property type="match status" value="1"/>
</dbReference>
<dbReference type="PROSITE" id="PS50857">
    <property type="entry name" value="COX2_CUA"/>
    <property type="match status" value="1"/>
</dbReference>
<dbReference type="PROSITE" id="PS50999">
    <property type="entry name" value="COX2_TM"/>
    <property type="match status" value="1"/>
</dbReference>
<protein>
    <recommendedName>
        <fullName>Cytochrome c oxidase subunit 2</fullName>
        <ecNumber>7.1.1.9</ecNumber>
    </recommendedName>
    <alternativeName>
        <fullName>Cytochrome c oxidase polypeptide II</fullName>
    </alternativeName>
</protein>
<gene>
    <name type="primary">COII</name>
</gene>
<comment type="function">
    <text evidence="1">Component of the cytochrome c oxidase, the last enzyme in the mitochondrial electron transport chain which drives oxidative phosphorylation. The respiratory chain contains 3 multisubunit complexes succinate dehydrogenase (complex II, CII), ubiquinol-cytochrome c oxidoreductase (cytochrome b-c1 complex, complex III, CIII) and cytochrome c oxidase (complex IV, CIV), that cooperate to transfer electrons derived from NADH and succinate to molecular oxygen, creating an electrochemical gradient over the inner membrane that drives transmembrane transport and the ATP synthase. Cytochrome c oxidase is the component of the respiratory chain that catalyzes the reduction of oxygen to water. Electrons originating from reduced cytochrome c in the intermembrane space (IMS) are transferred via the dinuclear copper A center (CU(A)) of subunit 2 and heme A of subunit 1 to the active site in subunit 1, a binuclear center (BNC) formed by heme A3 and copper B (CU(B)). The BNC reduces molecular oxygen to 2 water molecules using 4 electrons from cytochrome c in the IMS and 4 protons from the mitochondrial matrix.</text>
</comment>
<comment type="catalytic activity">
    <reaction evidence="1">
        <text>4 Fe(II)-[cytochrome c] + O2 + 8 H(+)(in) = 4 Fe(III)-[cytochrome c] + 2 H2O + 4 H(+)(out)</text>
        <dbReference type="Rhea" id="RHEA:11436"/>
        <dbReference type="Rhea" id="RHEA-COMP:10350"/>
        <dbReference type="Rhea" id="RHEA-COMP:14399"/>
        <dbReference type="ChEBI" id="CHEBI:15377"/>
        <dbReference type="ChEBI" id="CHEBI:15378"/>
        <dbReference type="ChEBI" id="CHEBI:15379"/>
        <dbReference type="ChEBI" id="CHEBI:29033"/>
        <dbReference type="ChEBI" id="CHEBI:29034"/>
        <dbReference type="EC" id="7.1.1.9"/>
    </reaction>
    <physiologicalReaction direction="left-to-right" evidence="1">
        <dbReference type="Rhea" id="RHEA:11437"/>
    </physiologicalReaction>
</comment>
<comment type="cofactor">
    <cofactor evidence="1">
        <name>Cu cation</name>
        <dbReference type="ChEBI" id="CHEBI:23378"/>
    </cofactor>
    <text evidence="1">Binds a dinuclear copper A center per subunit.</text>
</comment>
<comment type="subunit">
    <text evidence="1">Component of the cytochrome c oxidase (complex IV, CIV), a multisubunit enzyme composed of a catalytic core of 3 subunits and several supernumerary subunits. The complex exists as a monomer or a dimer and forms supercomplexes (SCs) in the inner mitochondrial membrane with ubiquinol-cytochrome c oxidoreductase (cytochrome b-c1 complex, complex III, CIII).</text>
</comment>
<comment type="subcellular location">
    <subcellularLocation>
        <location evidence="1">Mitochondrion inner membrane</location>
        <topology evidence="1">Multi-pass membrane protein</topology>
    </subcellularLocation>
</comment>
<comment type="similarity">
    <text evidence="3">Belongs to the cytochrome c oxidase subunit 2 family.</text>
</comment>
<keyword id="KW-0186">Copper</keyword>
<keyword id="KW-0249">Electron transport</keyword>
<keyword id="KW-0460">Magnesium</keyword>
<keyword id="KW-0472">Membrane</keyword>
<keyword id="KW-0479">Metal-binding</keyword>
<keyword id="KW-0496">Mitochondrion</keyword>
<keyword id="KW-0999">Mitochondrion inner membrane</keyword>
<keyword id="KW-0679">Respiratory chain</keyword>
<keyword id="KW-1278">Translocase</keyword>
<keyword id="KW-0812">Transmembrane</keyword>
<keyword id="KW-1133">Transmembrane helix</keyword>
<keyword id="KW-0813">Transport</keyword>
<name>COX2_APILI</name>
<sequence>MSTWFMFMFQESNSYYADNLISFHNMVMMIIIMISTLTVYIILDLFMNKFSNLFLLKNHNIEIIWTIIPIIILLIICFPSLKILYLIDEIVNPFFSIKSIGHQWYWSYEYPEFNNIEFDSYMLNYNNLNQFRLLETDNRMVIPMKIPLRLITTSTDVIHSWTVPSLGIKVDAVPGRINQLNLISKRPGIFFGQCSEICGMNHSFMPIMIESTSFQYFLNWVNKQI</sequence>
<organism>
    <name type="scientific">Apis mellifera ligustica</name>
    <name type="common">Common honeybee</name>
    <name type="synonym">Italian honeybee</name>
    <dbReference type="NCBI Taxonomy" id="7469"/>
    <lineage>
        <taxon>Eukaryota</taxon>
        <taxon>Metazoa</taxon>
        <taxon>Ecdysozoa</taxon>
        <taxon>Arthropoda</taxon>
        <taxon>Hexapoda</taxon>
        <taxon>Insecta</taxon>
        <taxon>Pterygota</taxon>
        <taxon>Neoptera</taxon>
        <taxon>Endopterygota</taxon>
        <taxon>Hymenoptera</taxon>
        <taxon>Apocrita</taxon>
        <taxon>Aculeata</taxon>
        <taxon>Apoidea</taxon>
        <taxon>Anthophila</taxon>
        <taxon>Apidae</taxon>
        <taxon>Apis</taxon>
    </lineage>
</organism>
<evidence type="ECO:0000250" key="1">
    <source>
        <dbReference type="UniProtKB" id="P00410"/>
    </source>
</evidence>
<evidence type="ECO:0000255" key="2"/>
<evidence type="ECO:0000305" key="3"/>
<feature type="chain" id="PRO_0000183499" description="Cytochrome c oxidase subunit 2">
    <location>
        <begin position="1"/>
        <end position="225"/>
    </location>
</feature>
<feature type="topological domain" description="Mitochondrial intermembrane" evidence="2">
    <location>
        <begin position="1"/>
        <end position="25"/>
    </location>
</feature>
<feature type="transmembrane region" description="Helical" evidence="2">
    <location>
        <begin position="26"/>
        <end position="47"/>
    </location>
</feature>
<feature type="topological domain" description="Mitochondrial matrix" evidence="2">
    <location>
        <begin position="48"/>
        <end position="62"/>
    </location>
</feature>
<feature type="transmembrane region" description="Helical" evidence="2">
    <location>
        <begin position="63"/>
        <end position="82"/>
    </location>
</feature>
<feature type="topological domain" description="Mitochondrial intermembrane" evidence="2">
    <location>
        <begin position="83"/>
        <end position="225"/>
    </location>
</feature>
<feature type="binding site" evidence="1">
    <location>
        <position position="159"/>
    </location>
    <ligand>
        <name>Cu cation</name>
        <dbReference type="ChEBI" id="CHEBI:23378"/>
        <label>A1</label>
    </ligand>
</feature>
<feature type="binding site" evidence="1">
    <location>
        <position position="194"/>
    </location>
    <ligand>
        <name>Cu cation</name>
        <dbReference type="ChEBI" id="CHEBI:23378"/>
        <label>A1</label>
    </ligand>
</feature>
<feature type="binding site" evidence="1">
    <location>
        <position position="194"/>
    </location>
    <ligand>
        <name>Cu cation</name>
        <dbReference type="ChEBI" id="CHEBI:23378"/>
        <label>A2</label>
    </ligand>
</feature>
<feature type="binding site" evidence="1">
    <location>
        <position position="196"/>
    </location>
    <ligand>
        <name>Cu cation</name>
        <dbReference type="ChEBI" id="CHEBI:23378"/>
        <label>A2</label>
    </ligand>
</feature>
<feature type="binding site" evidence="1">
    <location>
        <position position="196"/>
    </location>
    <ligand>
        <name>Mg(2+)</name>
        <dbReference type="ChEBI" id="CHEBI:18420"/>
        <note>ligand shared with subunit 1</note>
    </ligand>
</feature>
<feature type="binding site" evidence="1">
    <location>
        <position position="198"/>
    </location>
    <ligand>
        <name>Cu cation</name>
        <dbReference type="ChEBI" id="CHEBI:23378"/>
        <label>A1</label>
    </ligand>
</feature>
<feature type="binding site" evidence="1">
    <location>
        <position position="198"/>
    </location>
    <ligand>
        <name>Cu cation</name>
        <dbReference type="ChEBI" id="CHEBI:23378"/>
        <label>A2</label>
    </ligand>
</feature>
<feature type="binding site" evidence="1">
    <location>
        <position position="202"/>
    </location>
    <ligand>
        <name>Cu cation</name>
        <dbReference type="ChEBI" id="CHEBI:23378"/>
        <label>A2</label>
    </ligand>
</feature>
<feature type="binding site" evidence="1">
    <location>
        <position position="205"/>
    </location>
    <ligand>
        <name>Cu cation</name>
        <dbReference type="ChEBI" id="CHEBI:23378"/>
        <label>A1</label>
    </ligand>
</feature>